<name>SYS_STRZT</name>
<dbReference type="EC" id="6.1.1.11" evidence="1"/>
<dbReference type="EMBL" id="CP000921">
    <property type="protein sequence ID" value="ACO23992.1"/>
    <property type="molecule type" value="Genomic_DNA"/>
</dbReference>
<dbReference type="RefSeq" id="WP_000884253.1">
    <property type="nucleotide sequence ID" value="NC_012469.1"/>
</dbReference>
<dbReference type="SMR" id="C1CPS1"/>
<dbReference type="KEGG" id="snt:SPT_0448"/>
<dbReference type="HOGENOM" id="CLU_023797_1_1_9"/>
<dbReference type="UniPathway" id="UPA00906">
    <property type="reaction ID" value="UER00895"/>
</dbReference>
<dbReference type="GO" id="GO:0005737">
    <property type="term" value="C:cytoplasm"/>
    <property type="evidence" value="ECO:0007669"/>
    <property type="project" value="UniProtKB-SubCell"/>
</dbReference>
<dbReference type="GO" id="GO:0005524">
    <property type="term" value="F:ATP binding"/>
    <property type="evidence" value="ECO:0007669"/>
    <property type="project" value="UniProtKB-UniRule"/>
</dbReference>
<dbReference type="GO" id="GO:0140096">
    <property type="term" value="F:catalytic activity, acting on a protein"/>
    <property type="evidence" value="ECO:0007669"/>
    <property type="project" value="UniProtKB-ARBA"/>
</dbReference>
<dbReference type="GO" id="GO:0004828">
    <property type="term" value="F:serine-tRNA ligase activity"/>
    <property type="evidence" value="ECO:0007669"/>
    <property type="project" value="UniProtKB-UniRule"/>
</dbReference>
<dbReference type="GO" id="GO:0016740">
    <property type="term" value="F:transferase activity"/>
    <property type="evidence" value="ECO:0007669"/>
    <property type="project" value="UniProtKB-ARBA"/>
</dbReference>
<dbReference type="GO" id="GO:0016260">
    <property type="term" value="P:selenocysteine biosynthetic process"/>
    <property type="evidence" value="ECO:0007669"/>
    <property type="project" value="UniProtKB-UniRule"/>
</dbReference>
<dbReference type="GO" id="GO:0006434">
    <property type="term" value="P:seryl-tRNA aminoacylation"/>
    <property type="evidence" value="ECO:0007669"/>
    <property type="project" value="UniProtKB-UniRule"/>
</dbReference>
<dbReference type="CDD" id="cd00770">
    <property type="entry name" value="SerRS_core"/>
    <property type="match status" value="1"/>
</dbReference>
<dbReference type="Gene3D" id="3.30.930.10">
    <property type="entry name" value="Bira Bifunctional Protein, Domain 2"/>
    <property type="match status" value="1"/>
</dbReference>
<dbReference type="Gene3D" id="1.10.287.40">
    <property type="entry name" value="Serine-tRNA synthetase, tRNA binding domain"/>
    <property type="match status" value="1"/>
</dbReference>
<dbReference type="HAMAP" id="MF_00176">
    <property type="entry name" value="Ser_tRNA_synth_type1"/>
    <property type="match status" value="1"/>
</dbReference>
<dbReference type="InterPro" id="IPR002314">
    <property type="entry name" value="aa-tRNA-synt_IIb"/>
</dbReference>
<dbReference type="InterPro" id="IPR006195">
    <property type="entry name" value="aa-tRNA-synth_II"/>
</dbReference>
<dbReference type="InterPro" id="IPR045864">
    <property type="entry name" value="aa-tRNA-synth_II/BPL/LPL"/>
</dbReference>
<dbReference type="InterPro" id="IPR002317">
    <property type="entry name" value="Ser-tRNA-ligase_type_1"/>
</dbReference>
<dbReference type="InterPro" id="IPR015866">
    <property type="entry name" value="Ser-tRNA-synth_1_N"/>
</dbReference>
<dbReference type="InterPro" id="IPR042103">
    <property type="entry name" value="SerRS_1_N_sf"/>
</dbReference>
<dbReference type="InterPro" id="IPR033729">
    <property type="entry name" value="SerRS_core"/>
</dbReference>
<dbReference type="InterPro" id="IPR010978">
    <property type="entry name" value="tRNA-bd_arm"/>
</dbReference>
<dbReference type="NCBIfam" id="TIGR00414">
    <property type="entry name" value="serS"/>
    <property type="match status" value="1"/>
</dbReference>
<dbReference type="PANTHER" id="PTHR43697:SF1">
    <property type="entry name" value="SERINE--TRNA LIGASE"/>
    <property type="match status" value="1"/>
</dbReference>
<dbReference type="PANTHER" id="PTHR43697">
    <property type="entry name" value="SERYL-TRNA SYNTHETASE"/>
    <property type="match status" value="1"/>
</dbReference>
<dbReference type="Pfam" id="PF02403">
    <property type="entry name" value="Seryl_tRNA_N"/>
    <property type="match status" value="1"/>
</dbReference>
<dbReference type="Pfam" id="PF00587">
    <property type="entry name" value="tRNA-synt_2b"/>
    <property type="match status" value="1"/>
</dbReference>
<dbReference type="PIRSF" id="PIRSF001529">
    <property type="entry name" value="Ser-tRNA-synth_IIa"/>
    <property type="match status" value="1"/>
</dbReference>
<dbReference type="PRINTS" id="PR00981">
    <property type="entry name" value="TRNASYNTHSER"/>
</dbReference>
<dbReference type="SUPFAM" id="SSF55681">
    <property type="entry name" value="Class II aaRS and biotin synthetases"/>
    <property type="match status" value="1"/>
</dbReference>
<dbReference type="SUPFAM" id="SSF46589">
    <property type="entry name" value="tRNA-binding arm"/>
    <property type="match status" value="1"/>
</dbReference>
<dbReference type="PROSITE" id="PS50862">
    <property type="entry name" value="AA_TRNA_LIGASE_II"/>
    <property type="match status" value="1"/>
</dbReference>
<organism>
    <name type="scientific">Streptococcus pneumoniae (strain Taiwan19F-14)</name>
    <dbReference type="NCBI Taxonomy" id="487213"/>
    <lineage>
        <taxon>Bacteria</taxon>
        <taxon>Bacillati</taxon>
        <taxon>Bacillota</taxon>
        <taxon>Bacilli</taxon>
        <taxon>Lactobacillales</taxon>
        <taxon>Streptococcaceae</taxon>
        <taxon>Streptococcus</taxon>
    </lineage>
</organism>
<accession>C1CPS1</accession>
<keyword id="KW-0030">Aminoacyl-tRNA synthetase</keyword>
<keyword id="KW-0067">ATP-binding</keyword>
<keyword id="KW-0963">Cytoplasm</keyword>
<keyword id="KW-0436">Ligase</keyword>
<keyword id="KW-0547">Nucleotide-binding</keyword>
<keyword id="KW-0648">Protein biosynthesis</keyword>
<proteinExistence type="inferred from homology"/>
<protein>
    <recommendedName>
        <fullName evidence="1">Serine--tRNA ligase</fullName>
        <ecNumber evidence="1">6.1.1.11</ecNumber>
    </recommendedName>
    <alternativeName>
        <fullName evidence="1">Seryl-tRNA synthetase</fullName>
        <shortName evidence="1">SerRS</shortName>
    </alternativeName>
    <alternativeName>
        <fullName evidence="1">Seryl-tRNA(Ser/Sec) synthetase</fullName>
    </alternativeName>
</protein>
<sequence length="424" mass="47694">MLDIKRIRTDFEAVAEKLATRGVDAAVLNEMKEIDAKRRNILVKVETLKAERNTVSAEIAQAKRNKENTDDKIAAMQNLSAEVKALDAELAEIDAKLTEFTTTLPNIPADSVPVGADEDDNVEVRRWGTPREFDFEPKAHWDLGEDLGILDWERGGKVTGARFLFYKGLGARLERAIYNFMLDEHGKEGYTEVITPYIVNHDSMFGTGQYPKFKEDTFELSDTNFVLIPTAEVPLTNYYRDEILDGKDLPIYFTAMSPSFRSEAGSAGRDTRGLIRLHQFHKVEMVKFAKPEESYEELEKMTANAENILQKLNLPYRVVALSTGDMGFSAAKTYDLEVWIPAQNNYREISSCSNTEDFQARRAQIRYRDEADGKVKLLHTLNGSGLAVGRTVAAILENYQNEDGSVTIPEALRPYMGGAEVIKP</sequence>
<evidence type="ECO:0000255" key="1">
    <source>
        <dbReference type="HAMAP-Rule" id="MF_00176"/>
    </source>
</evidence>
<comment type="function">
    <text evidence="1">Catalyzes the attachment of serine to tRNA(Ser). Is also able to aminoacylate tRNA(Sec) with serine, to form the misacylated tRNA L-seryl-tRNA(Sec), which will be further converted into selenocysteinyl-tRNA(Sec).</text>
</comment>
<comment type="catalytic activity">
    <reaction evidence="1">
        <text>tRNA(Ser) + L-serine + ATP = L-seryl-tRNA(Ser) + AMP + diphosphate + H(+)</text>
        <dbReference type="Rhea" id="RHEA:12292"/>
        <dbReference type="Rhea" id="RHEA-COMP:9669"/>
        <dbReference type="Rhea" id="RHEA-COMP:9703"/>
        <dbReference type="ChEBI" id="CHEBI:15378"/>
        <dbReference type="ChEBI" id="CHEBI:30616"/>
        <dbReference type="ChEBI" id="CHEBI:33019"/>
        <dbReference type="ChEBI" id="CHEBI:33384"/>
        <dbReference type="ChEBI" id="CHEBI:78442"/>
        <dbReference type="ChEBI" id="CHEBI:78533"/>
        <dbReference type="ChEBI" id="CHEBI:456215"/>
        <dbReference type="EC" id="6.1.1.11"/>
    </reaction>
</comment>
<comment type="catalytic activity">
    <reaction evidence="1">
        <text>tRNA(Sec) + L-serine + ATP = L-seryl-tRNA(Sec) + AMP + diphosphate + H(+)</text>
        <dbReference type="Rhea" id="RHEA:42580"/>
        <dbReference type="Rhea" id="RHEA-COMP:9742"/>
        <dbReference type="Rhea" id="RHEA-COMP:10128"/>
        <dbReference type="ChEBI" id="CHEBI:15378"/>
        <dbReference type="ChEBI" id="CHEBI:30616"/>
        <dbReference type="ChEBI" id="CHEBI:33019"/>
        <dbReference type="ChEBI" id="CHEBI:33384"/>
        <dbReference type="ChEBI" id="CHEBI:78442"/>
        <dbReference type="ChEBI" id="CHEBI:78533"/>
        <dbReference type="ChEBI" id="CHEBI:456215"/>
        <dbReference type="EC" id="6.1.1.11"/>
    </reaction>
</comment>
<comment type="pathway">
    <text evidence="1">Aminoacyl-tRNA biosynthesis; selenocysteinyl-tRNA(Sec) biosynthesis; L-seryl-tRNA(Sec) from L-serine and tRNA(Sec): step 1/1.</text>
</comment>
<comment type="subunit">
    <text evidence="1">Homodimer. The tRNA molecule binds across the dimer.</text>
</comment>
<comment type="subcellular location">
    <subcellularLocation>
        <location evidence="1">Cytoplasm</location>
    </subcellularLocation>
</comment>
<comment type="domain">
    <text evidence="1">Consists of two distinct domains, a catalytic core and a N-terminal extension that is involved in tRNA binding.</text>
</comment>
<comment type="similarity">
    <text evidence="1">Belongs to the class-II aminoacyl-tRNA synthetase family. Type-1 seryl-tRNA synthetase subfamily.</text>
</comment>
<feature type="chain" id="PRO_1000199510" description="Serine--tRNA ligase">
    <location>
        <begin position="1"/>
        <end position="424"/>
    </location>
</feature>
<feature type="binding site" evidence="1">
    <location>
        <begin position="230"/>
        <end position="232"/>
    </location>
    <ligand>
        <name>L-serine</name>
        <dbReference type="ChEBI" id="CHEBI:33384"/>
    </ligand>
</feature>
<feature type="binding site" evidence="1">
    <location>
        <begin position="261"/>
        <end position="263"/>
    </location>
    <ligand>
        <name>ATP</name>
        <dbReference type="ChEBI" id="CHEBI:30616"/>
    </ligand>
</feature>
<feature type="binding site" evidence="1">
    <location>
        <position position="284"/>
    </location>
    <ligand>
        <name>L-serine</name>
        <dbReference type="ChEBI" id="CHEBI:33384"/>
    </ligand>
</feature>
<feature type="binding site" evidence="1">
    <location>
        <begin position="348"/>
        <end position="351"/>
    </location>
    <ligand>
        <name>ATP</name>
        <dbReference type="ChEBI" id="CHEBI:30616"/>
    </ligand>
</feature>
<feature type="binding site" evidence="1">
    <location>
        <position position="384"/>
    </location>
    <ligand>
        <name>L-serine</name>
        <dbReference type="ChEBI" id="CHEBI:33384"/>
    </ligand>
</feature>
<gene>
    <name evidence="1" type="primary">serS</name>
    <name type="ordered locus">SPT_0448</name>
</gene>
<reference key="1">
    <citation type="journal article" date="2010" name="Genome Biol.">
        <title>Structure and dynamics of the pan-genome of Streptococcus pneumoniae and closely related species.</title>
        <authorList>
            <person name="Donati C."/>
            <person name="Hiller N.L."/>
            <person name="Tettelin H."/>
            <person name="Muzzi A."/>
            <person name="Croucher N.J."/>
            <person name="Angiuoli S.V."/>
            <person name="Oggioni M."/>
            <person name="Dunning Hotopp J.C."/>
            <person name="Hu F.Z."/>
            <person name="Riley D.R."/>
            <person name="Covacci A."/>
            <person name="Mitchell T.J."/>
            <person name="Bentley S.D."/>
            <person name="Kilian M."/>
            <person name="Ehrlich G.D."/>
            <person name="Rappuoli R."/>
            <person name="Moxon E.R."/>
            <person name="Masignani V."/>
        </authorList>
    </citation>
    <scope>NUCLEOTIDE SEQUENCE [LARGE SCALE GENOMIC DNA]</scope>
    <source>
        <strain>Taiwan19F-14</strain>
    </source>
</reference>